<name>EGG2_CAEEL</name>
<accession>Q21629</accession>
<organism evidence="9">
    <name type="scientific">Caenorhabditis elegans</name>
    <dbReference type="NCBI Taxonomy" id="6239"/>
    <lineage>
        <taxon>Eukaryota</taxon>
        <taxon>Metazoa</taxon>
        <taxon>Ecdysozoa</taxon>
        <taxon>Nematoda</taxon>
        <taxon>Chromadorea</taxon>
        <taxon>Rhabditida</taxon>
        <taxon>Rhabditina</taxon>
        <taxon>Rhabditomorpha</taxon>
        <taxon>Rhabditoidea</taxon>
        <taxon>Rhabditidae</taxon>
        <taxon>Peloderinae</taxon>
        <taxon>Caenorhabditis</taxon>
    </lineage>
</organism>
<keyword id="KW-1003">Cell membrane</keyword>
<keyword id="KW-0217">Developmental protein</keyword>
<keyword id="KW-1015">Disulfide bond</keyword>
<keyword id="KW-0967">Endosome</keyword>
<keyword id="KW-0278">Fertilization</keyword>
<keyword id="KW-0325">Glycoprotein</keyword>
<keyword id="KW-0472">Membrane</keyword>
<keyword id="KW-0675">Receptor</keyword>
<keyword id="KW-1185">Reference proteome</keyword>
<keyword id="KW-0677">Repeat</keyword>
<keyword id="KW-0735">Signal-anchor</keyword>
<keyword id="KW-0812">Transmembrane</keyword>
<keyword id="KW-1133">Transmembrane helix</keyword>
<evidence type="ECO:0000250" key="1">
    <source>
        <dbReference type="UniProtKB" id="Q09967"/>
    </source>
</evidence>
<evidence type="ECO:0000255" key="2"/>
<evidence type="ECO:0000255" key="3">
    <source>
        <dbReference type="PROSITE-ProRule" id="PRU00124"/>
    </source>
</evidence>
<evidence type="ECO:0000255" key="4">
    <source>
        <dbReference type="PROSITE-ProRule" id="PRU00498"/>
    </source>
</evidence>
<evidence type="ECO:0000269" key="5">
    <source>
    </source>
</evidence>
<evidence type="ECO:0000269" key="6">
    <source>
    </source>
</evidence>
<evidence type="ECO:0000303" key="7">
    <source>
    </source>
</evidence>
<evidence type="ECO:0000305" key="8"/>
<evidence type="ECO:0000312" key="9">
    <source>
        <dbReference type="Proteomes" id="UP000001940"/>
    </source>
</evidence>
<evidence type="ECO:0000312" key="10">
    <source>
        <dbReference type="WormBase" id="R01H2.3"/>
    </source>
</evidence>
<protein>
    <recommendedName>
        <fullName evidence="7">LDL receptor repeat-containing protein egg-2</fullName>
    </recommendedName>
    <alternativeName>
        <fullName evidence="10">Egg sterile protein 2</fullName>
    </alternativeName>
</protein>
<comment type="function">
    <text evidence="5 6">Probable receptor which is required for the oocyte-to-zygote transition although its exact function is controversial (PubMed:16360684, PubMed:20971008). Redundantly with egg-1, seems to be required for fertilization probably by promoting the interaction or fusion between sperm and oocyte (PubMed:16360684). Conversely, shown to be dispensable for fertilization but required together with egg-1 for the formation of a continuous and cohesive eggshell chitin layer by maintaining a homogenous distribution of chitin synthase chs-1 at the unfertilized oocyte cell membrane (PubMed:20971008). Appears to recruit or maintain together to the unfertilized oocyte cortex several proteins including chs-1, kinase mbk-2 and pseudophosphatase egg-3, and possibly egg-4 and egg-5 (PubMed:20971008).</text>
</comment>
<comment type="subcellular location">
    <subcellularLocation>
        <location evidence="6">Cell membrane</location>
        <topology evidence="1">Single-pass type II membrane protein</topology>
    </subcellularLocation>
    <subcellularLocation>
        <location evidence="1">Endosome membrane</location>
        <topology evidence="1">Single-pass type II membrane protein</topology>
    </subcellularLocation>
    <text evidence="1 6">Localizes to the cell membrane of developing oocytes (PubMed:20971008). Plasma membrane localization requires extracellular matrix protein cbd-1 (PubMed:20971008). After fertilization, localizes to endosomes in zygotes (By similarity).</text>
</comment>
<comment type="disruption phenotype">
    <text evidence="5 6">Severe sterility at the restrictive temperature of 25 degrees Celsius (PubMed:16360684). Accumulation of unfertilized oocytes in the uterus, although this is controversial (PubMed:16360684). Simultaneous RNAi-mediated knockdown with egg-1 results in a fragmented eggshell chitin layer which often accumulates at one end of the embryo (PubMed:20971008). In unfertilized oocytes, disrupts the homogenous distribution of cortical chitin synthase chs-1, pseudophosphatase egg-3 and kinase mbk-2 (PubMed:20971008). In a egg-1 (tm1071) mutant background, causes polyspermy (PubMed:20971008).</text>
</comment>
<dbReference type="EMBL" id="BX284603">
    <property type="protein sequence ID" value="CCD69284.1"/>
    <property type="molecule type" value="Genomic_DNA"/>
</dbReference>
<dbReference type="PIR" id="T16642">
    <property type="entry name" value="T16642"/>
</dbReference>
<dbReference type="RefSeq" id="NP_498537.1">
    <property type="nucleotide sequence ID" value="NM_066136.7"/>
</dbReference>
<dbReference type="FunCoup" id="Q21629">
    <property type="interactions" value="95"/>
</dbReference>
<dbReference type="STRING" id="6239.R01H2.3.2"/>
<dbReference type="GlyCosmos" id="Q21629">
    <property type="glycosylation" value="3 sites, No reported glycans"/>
</dbReference>
<dbReference type="PaxDb" id="6239-R01H2.3"/>
<dbReference type="PeptideAtlas" id="Q21629"/>
<dbReference type="EnsemblMetazoa" id="R01H2.3.1">
    <property type="protein sequence ID" value="R01H2.3.1"/>
    <property type="gene ID" value="WBGene00019811"/>
</dbReference>
<dbReference type="GeneID" id="187510"/>
<dbReference type="KEGG" id="cel:CELE_R01H2.3"/>
<dbReference type="UCSC" id="R01H2.3">
    <property type="organism name" value="c. elegans"/>
</dbReference>
<dbReference type="AGR" id="WB:WBGene00019811"/>
<dbReference type="CTD" id="187510"/>
<dbReference type="WormBase" id="R01H2.3">
    <property type="protein sequence ID" value="CE00802"/>
    <property type="gene ID" value="WBGene00019811"/>
    <property type="gene designation" value="egg-2"/>
</dbReference>
<dbReference type="eggNOG" id="KOG1215">
    <property type="taxonomic scope" value="Eukaryota"/>
</dbReference>
<dbReference type="GeneTree" id="ENSGT00940000162544"/>
<dbReference type="HOGENOM" id="CLU_021811_0_0_1"/>
<dbReference type="InParanoid" id="Q21629"/>
<dbReference type="OMA" id="HCNCSKI"/>
<dbReference type="OrthoDB" id="10062665at2759"/>
<dbReference type="PhylomeDB" id="Q21629"/>
<dbReference type="PRO" id="PR:Q21629"/>
<dbReference type="Proteomes" id="UP000001940">
    <property type="component" value="Chromosome III"/>
</dbReference>
<dbReference type="Bgee" id="WBGene00019811">
    <property type="expression patterns" value="Expressed in germ line (C elegans) and 3 other cell types or tissues"/>
</dbReference>
<dbReference type="GO" id="GO:0010008">
    <property type="term" value="C:endosome membrane"/>
    <property type="evidence" value="ECO:0007669"/>
    <property type="project" value="UniProtKB-SubCell"/>
</dbReference>
<dbReference type="GO" id="GO:0005886">
    <property type="term" value="C:plasma membrane"/>
    <property type="evidence" value="ECO:0000314"/>
    <property type="project" value="UniProtKB"/>
</dbReference>
<dbReference type="GO" id="GO:0038023">
    <property type="term" value="F:signaling receptor activity"/>
    <property type="evidence" value="ECO:0000250"/>
    <property type="project" value="WormBase"/>
</dbReference>
<dbReference type="GO" id="GO:0030703">
    <property type="term" value="P:eggshell formation"/>
    <property type="evidence" value="ECO:0000316"/>
    <property type="project" value="UniProtKB"/>
</dbReference>
<dbReference type="GO" id="GO:1904778">
    <property type="term" value="P:positive regulation of protein localization to cell cortex"/>
    <property type="evidence" value="ECO:0000316"/>
    <property type="project" value="UniProtKB"/>
</dbReference>
<dbReference type="GO" id="GO:1903078">
    <property type="term" value="P:positive regulation of protein localization to plasma membrane"/>
    <property type="evidence" value="ECO:0000316"/>
    <property type="project" value="UniProtKB"/>
</dbReference>
<dbReference type="GO" id="GO:0007338">
    <property type="term" value="P:single fertilization"/>
    <property type="evidence" value="ECO:0000315"/>
    <property type="project" value="WormBase"/>
</dbReference>
<dbReference type="CDD" id="cd00112">
    <property type="entry name" value="LDLa"/>
    <property type="match status" value="7"/>
</dbReference>
<dbReference type="FunFam" id="4.10.400.10:FF:000164">
    <property type="entry name" value="Basement membrane-specific heparan sulfate proteoglycan core protein-like Protein"/>
    <property type="match status" value="1"/>
</dbReference>
<dbReference type="FunFam" id="4.10.400.10:FF:000231">
    <property type="entry name" value="LDL receptor repeat-containing protein egg-1"/>
    <property type="match status" value="1"/>
</dbReference>
<dbReference type="FunFam" id="4.10.400.10:FF:000234">
    <property type="entry name" value="LDL receptor repeat-containing protein egg-1"/>
    <property type="match status" value="1"/>
</dbReference>
<dbReference type="FunFam" id="4.10.400.10:FF:000237">
    <property type="entry name" value="LDL receptor repeat-containing protein egg-1"/>
    <property type="match status" value="1"/>
</dbReference>
<dbReference type="FunFam" id="4.10.400.10:FF:000311">
    <property type="entry name" value="LDL receptor repeat-containing protein egg-1"/>
    <property type="match status" value="1"/>
</dbReference>
<dbReference type="FunFam" id="4.10.400.10:FF:000270">
    <property type="entry name" value="LDL receptor repeat-containing protein egg-2"/>
    <property type="match status" value="1"/>
</dbReference>
<dbReference type="Gene3D" id="4.10.400.10">
    <property type="entry name" value="Low-density Lipoprotein Receptor"/>
    <property type="match status" value="8"/>
</dbReference>
<dbReference type="InterPro" id="IPR036055">
    <property type="entry name" value="LDL_receptor-like_sf"/>
</dbReference>
<dbReference type="InterPro" id="IPR051221">
    <property type="entry name" value="LDLR-related"/>
</dbReference>
<dbReference type="InterPro" id="IPR023415">
    <property type="entry name" value="LDLR_class-A_CS"/>
</dbReference>
<dbReference type="InterPro" id="IPR002172">
    <property type="entry name" value="LDrepeatLR_classA_rpt"/>
</dbReference>
<dbReference type="PANTHER" id="PTHR22722">
    <property type="entry name" value="LOW-DENSITY LIPOPROTEIN RECEPTOR-RELATED PROTEIN 2-RELATED"/>
    <property type="match status" value="1"/>
</dbReference>
<dbReference type="PANTHER" id="PTHR22722:SF14">
    <property type="entry name" value="MEGALIN, ISOFORM A"/>
    <property type="match status" value="1"/>
</dbReference>
<dbReference type="Pfam" id="PF00057">
    <property type="entry name" value="Ldl_recept_a"/>
    <property type="match status" value="7"/>
</dbReference>
<dbReference type="PRINTS" id="PR00261">
    <property type="entry name" value="LDLRECEPTOR"/>
</dbReference>
<dbReference type="SMART" id="SM00192">
    <property type="entry name" value="LDLa"/>
    <property type="match status" value="8"/>
</dbReference>
<dbReference type="SUPFAM" id="SSF57424">
    <property type="entry name" value="LDL receptor-like module"/>
    <property type="match status" value="8"/>
</dbReference>
<dbReference type="PROSITE" id="PS01209">
    <property type="entry name" value="LDLRA_1"/>
    <property type="match status" value="7"/>
</dbReference>
<dbReference type="PROSITE" id="PS50068">
    <property type="entry name" value="LDLRA_2"/>
    <property type="match status" value="8"/>
</dbReference>
<sequence>MSQQAGNAQRGRFDEEPMSLGEKISHRMDQLKEIVSSSCPCAGKFPPVAIVLIVALIILGVIIAVPLVIFLSPSAQAMSSGTRDLSSHSIRHPKVWPKTEKVQDDDLSAIQMTSLLPPNVSTCSGFGFACTGSIDMIIPSSKRCDGLKDCSDGSDEENCKECQSIYSCRAHIEEESEKKDKTSVLPTLICLTAEKLCNGVENCPDGSDEASCRSKCSKDQFKCSGSDACLPISVKCDGVSDCENESDESNCNKCQKGAHKCGKNCIKASKVCDGIPDCDDGSDEHQCDCKTCSGSEKALCEDGTCIMRSQVCDGKHDCLDGIDEENCPGSCSNERFSSKLKLLTCDDGNQYSEVEACSGLVEACELNCPKCDPKHTFTCPAVGGIHNKCIKRSKVCDGIFDCEDGADEKKCTPVKECVVESSIQFTCDNKCLESSRRCDGVWDCEDKSDEKGCDKCPSRSFKCSADKKCLPFHTRCNGVAECSDGSDEHKCSCQECLGTHHDTYMCSESNRCLKRGEVCSPYSMCPNATYIDKAYCASLALKNSGLRP</sequence>
<reference evidence="9" key="1">
    <citation type="journal article" date="1998" name="Science">
        <title>Genome sequence of the nematode C. elegans: a platform for investigating biology.</title>
        <authorList>
            <consortium name="The C. elegans sequencing consortium"/>
        </authorList>
    </citation>
    <scope>NUCLEOTIDE SEQUENCE [LARGE SCALE GENOMIC DNA]</scope>
    <source>
        <strain evidence="9">Bristol N2</strain>
    </source>
</reference>
<reference evidence="8" key="2">
    <citation type="journal article" date="2005" name="Curr. Biol.">
        <title>The egg surface LDL receptor repeat-containing proteins EGG-1 and EGG-2 are required for fertilization in Caenorhabditis elegans.</title>
        <authorList>
            <person name="Kadandale P."/>
            <person name="Stewart-Michaelis A."/>
            <person name="Gordon S."/>
            <person name="Rubin J."/>
            <person name="Klancer R."/>
            <person name="Schweinsberg P."/>
            <person name="Grant B.D."/>
            <person name="Singson A."/>
        </authorList>
    </citation>
    <scope>FUNCTION</scope>
    <scope>DISRUPTION PHENOTYPE</scope>
</reference>
<reference evidence="8" key="3">
    <citation type="journal article" date="2010" name="Curr. Biol.">
        <title>Eggshell chitin and chitin-interacting proteins prevent polyspermy in C. elegans.</title>
        <authorList>
            <person name="Johnston W.L."/>
            <person name="Krizus A."/>
            <person name="Dennis J.W."/>
        </authorList>
    </citation>
    <scope>FUNCTION</scope>
    <scope>SUBCELLULAR LOCATION</scope>
    <scope>DISRUPTION PHENOTYPE</scope>
</reference>
<proteinExistence type="inferred from homology"/>
<feature type="chain" id="PRO_0000442795" description="LDL receptor repeat-containing protein egg-2">
    <location>
        <begin position="1"/>
        <end position="548"/>
    </location>
</feature>
<feature type="topological domain" description="Cytoplasmic" evidence="8">
    <location>
        <begin position="1"/>
        <end position="49"/>
    </location>
</feature>
<feature type="transmembrane region" description="Helical; Signal-anchor for type II membrane protein" evidence="2">
    <location>
        <begin position="50"/>
        <end position="70"/>
    </location>
</feature>
<feature type="topological domain" description="Extracellular" evidence="8">
    <location>
        <begin position="71"/>
        <end position="548"/>
    </location>
</feature>
<feature type="domain" description="LDL-receptor class A 1" evidence="3">
    <location>
        <begin position="122"/>
        <end position="160"/>
    </location>
</feature>
<feature type="domain" description="LDL-receptor class A 2" evidence="3">
    <location>
        <begin position="161"/>
        <end position="213"/>
    </location>
</feature>
<feature type="domain" description="LDL-receptor class A 3" evidence="3">
    <location>
        <begin position="215"/>
        <end position="252"/>
    </location>
</feature>
<feature type="domain" description="LDL-receptor class A 4" evidence="3">
    <location>
        <begin position="253"/>
        <end position="288"/>
    </location>
</feature>
<feature type="domain" description="LDL-receptor class A 5" evidence="3">
    <location>
        <begin position="291"/>
        <end position="328"/>
    </location>
</feature>
<feature type="domain" description="LDL-receptor class A 6" evidence="3">
    <location>
        <begin position="370"/>
        <end position="412"/>
    </location>
</feature>
<feature type="domain" description="LDL-receptor class A 7" evidence="3">
    <location>
        <begin position="416"/>
        <end position="454"/>
    </location>
</feature>
<feature type="domain" description="LDL-receptor class A 8" evidence="3">
    <location>
        <begin position="455"/>
        <end position="492"/>
    </location>
</feature>
<feature type="glycosylation site" description="N-linked (GlcNAc...) asparagine" evidence="4">
    <location>
        <position position="119"/>
    </location>
</feature>
<feature type="glycosylation site" description="N-linked (GlcNAc...) asparagine" evidence="4">
    <location>
        <position position="244"/>
    </location>
</feature>
<feature type="glycosylation site" description="N-linked (GlcNAc...) asparagine" evidence="4">
    <location>
        <position position="527"/>
    </location>
</feature>
<feature type="disulfide bond" evidence="3">
    <location>
        <begin position="130"/>
        <end position="150"/>
    </location>
</feature>
<feature type="disulfide bond" evidence="3">
    <location>
        <begin position="144"/>
        <end position="159"/>
    </location>
</feature>
<feature type="disulfide bond" evidence="3">
    <location>
        <begin position="162"/>
        <end position="190"/>
    </location>
</feature>
<feature type="disulfide bond" evidence="3">
    <location>
        <begin position="168"/>
        <end position="203"/>
    </location>
</feature>
<feature type="disulfide bond" evidence="3">
    <location>
        <begin position="197"/>
        <end position="212"/>
    </location>
</feature>
<feature type="disulfide bond" evidence="3">
    <location>
        <begin position="216"/>
        <end position="229"/>
    </location>
</feature>
<feature type="disulfide bond" evidence="3">
    <location>
        <begin position="223"/>
        <end position="242"/>
    </location>
</feature>
<feature type="disulfide bond" evidence="3">
    <location>
        <begin position="236"/>
        <end position="251"/>
    </location>
</feature>
<feature type="disulfide bond" evidence="3">
    <location>
        <begin position="254"/>
        <end position="265"/>
    </location>
</feature>
<feature type="disulfide bond" evidence="3">
    <location>
        <begin position="261"/>
        <end position="278"/>
    </location>
</feature>
<feature type="disulfide bond" evidence="3">
    <location>
        <begin position="272"/>
        <end position="287"/>
    </location>
</feature>
<feature type="disulfide bond" evidence="3">
    <location>
        <begin position="292"/>
        <end position="305"/>
    </location>
</feature>
<feature type="disulfide bond" evidence="3">
    <location>
        <begin position="300"/>
        <end position="318"/>
    </location>
</feature>
<feature type="disulfide bond" evidence="3">
    <location>
        <begin position="312"/>
        <end position="327"/>
    </location>
</feature>
<feature type="disulfide bond" evidence="3">
    <location>
        <begin position="371"/>
        <end position="389"/>
    </location>
</feature>
<feature type="disulfide bond" evidence="3">
    <location>
        <begin position="379"/>
        <end position="402"/>
    </location>
</feature>
<feature type="disulfide bond" evidence="3">
    <location>
        <begin position="396"/>
        <end position="411"/>
    </location>
</feature>
<feature type="disulfide bond" evidence="3">
    <location>
        <begin position="417"/>
        <end position="431"/>
    </location>
</feature>
<feature type="disulfide bond" evidence="3">
    <location>
        <begin position="427"/>
        <end position="444"/>
    </location>
</feature>
<feature type="disulfide bond" evidence="3">
    <location>
        <begin position="438"/>
        <end position="453"/>
    </location>
</feature>
<feature type="disulfide bond" evidence="3">
    <location>
        <begin position="456"/>
        <end position="469"/>
    </location>
</feature>
<feature type="disulfide bond" evidence="3">
    <location>
        <begin position="463"/>
        <end position="482"/>
    </location>
</feature>
<feature type="disulfide bond" evidence="3">
    <location>
        <begin position="476"/>
        <end position="491"/>
    </location>
</feature>
<gene>
    <name evidence="10" type="primary">egg-2</name>
    <name evidence="10" type="ORF">R01H2.3</name>
</gene>